<dbReference type="EMBL" id="AJ006022">
    <property type="protein sequence ID" value="CAA06814.1"/>
    <property type="status" value="ALT_SEQ"/>
    <property type="molecule type" value="Genomic_DNA"/>
</dbReference>
<dbReference type="SMR" id="O91084"/>
<dbReference type="Proteomes" id="UP000007420">
    <property type="component" value="Segment"/>
</dbReference>
<dbReference type="GO" id="GO:0030430">
    <property type="term" value="C:host cell cytoplasm"/>
    <property type="evidence" value="ECO:0007669"/>
    <property type="project" value="UniProtKB-SubCell"/>
</dbReference>
<dbReference type="GO" id="GO:0044196">
    <property type="term" value="C:host cell nucleolus"/>
    <property type="evidence" value="ECO:0007669"/>
    <property type="project" value="UniProtKB-SubCell"/>
</dbReference>
<dbReference type="GO" id="GO:0003700">
    <property type="term" value="F:DNA-binding transcription factor activity"/>
    <property type="evidence" value="ECO:0007669"/>
    <property type="project" value="UniProtKB-UniRule"/>
</dbReference>
<dbReference type="GO" id="GO:0003723">
    <property type="term" value="F:RNA binding"/>
    <property type="evidence" value="ECO:0007669"/>
    <property type="project" value="UniProtKB-UniRule"/>
</dbReference>
<dbReference type="GO" id="GO:0051028">
    <property type="term" value="P:mRNA transport"/>
    <property type="evidence" value="ECO:0007669"/>
    <property type="project" value="UniProtKB-UniRule"/>
</dbReference>
<dbReference type="GO" id="GO:0016032">
    <property type="term" value="P:viral process"/>
    <property type="evidence" value="ECO:0007669"/>
    <property type="project" value="UniProtKB-UniRule"/>
</dbReference>
<dbReference type="Gene3D" id="6.10.140.630">
    <property type="match status" value="1"/>
</dbReference>
<dbReference type="HAMAP" id="MF_04077">
    <property type="entry name" value="REV_HIV1"/>
    <property type="match status" value="1"/>
</dbReference>
<dbReference type="InterPro" id="IPR000625">
    <property type="entry name" value="REV_protein"/>
</dbReference>
<dbReference type="Pfam" id="PF00424">
    <property type="entry name" value="REV"/>
    <property type="match status" value="1"/>
</dbReference>
<proteinExistence type="inferred from homology"/>
<keyword id="KW-0014">AIDS</keyword>
<keyword id="KW-1035">Host cytoplasm</keyword>
<keyword id="KW-1048">Host nucleus</keyword>
<keyword id="KW-0945">Host-virus interaction</keyword>
<keyword id="KW-0488">Methylation</keyword>
<keyword id="KW-0509">mRNA transport</keyword>
<keyword id="KW-0597">Phosphoprotein</keyword>
<keyword id="KW-1185">Reference proteome</keyword>
<keyword id="KW-0694">RNA-binding</keyword>
<keyword id="KW-0813">Transport</keyword>
<gene>
    <name evidence="1" type="primary">rev</name>
</gene>
<evidence type="ECO:0000255" key="1">
    <source>
        <dbReference type="HAMAP-Rule" id="MF_04077"/>
    </source>
</evidence>
<evidence type="ECO:0000256" key="2">
    <source>
        <dbReference type="SAM" id="MobiDB-lite"/>
    </source>
</evidence>
<name>REV_HV1YF</name>
<organism>
    <name type="scientific">Human immunodeficiency virus type 1 group N (isolate YBF30)</name>
    <name type="common">HIV-1</name>
    <dbReference type="NCBI Taxonomy" id="388818"/>
    <lineage>
        <taxon>Viruses</taxon>
        <taxon>Riboviria</taxon>
        <taxon>Pararnavirae</taxon>
        <taxon>Artverviricota</taxon>
        <taxon>Revtraviricetes</taxon>
        <taxon>Ortervirales</taxon>
        <taxon>Retroviridae</taxon>
        <taxon>Orthoretrovirinae</taxon>
        <taxon>Lentivirus</taxon>
        <taxon>Human immunodeficiency virus type 1</taxon>
    </lineage>
</organism>
<protein>
    <recommendedName>
        <fullName evidence="1">Protein Rev</fullName>
    </recommendedName>
    <alternativeName>
        <fullName evidence="1">ART/TRS</fullName>
    </alternativeName>
    <alternativeName>
        <fullName evidence="1">Anti-repression transactivator</fullName>
    </alternativeName>
    <alternativeName>
        <fullName evidence="1">Regulator of expression of viral proteins</fullName>
    </alternativeName>
</protein>
<feature type="chain" id="PRO_0000245009" description="Protein Rev">
    <location>
        <begin position="1"/>
        <end position="104"/>
    </location>
</feature>
<feature type="region of interest" description="Homomultimerization" evidence="1">
    <location>
        <begin position="18"/>
        <end position="26"/>
    </location>
</feature>
<feature type="region of interest" description="Disordered" evidence="2">
    <location>
        <begin position="25"/>
        <end position="48"/>
    </location>
</feature>
<feature type="region of interest" description="Disordered" evidence="2">
    <location>
        <begin position="63"/>
        <end position="104"/>
    </location>
</feature>
<feature type="short sequence motif" description="Nuclear localization signal and RNA-binding (RRE)" evidence="1">
    <location>
        <begin position="34"/>
        <end position="50"/>
    </location>
</feature>
<feature type="short sequence motif" description="Nuclear export signal and binding to XPO1" evidence="1">
    <location>
        <begin position="73"/>
        <end position="84"/>
    </location>
</feature>
<feature type="compositionally biased region" description="Polar residues" evidence="2">
    <location>
        <begin position="25"/>
        <end position="34"/>
    </location>
</feature>
<feature type="compositionally biased region" description="Basic residues" evidence="2">
    <location>
        <begin position="35"/>
        <end position="48"/>
    </location>
</feature>
<feature type="compositionally biased region" description="Pro residues" evidence="2">
    <location>
        <begin position="67"/>
        <end position="77"/>
    </location>
</feature>
<feature type="compositionally biased region" description="Polar residues" evidence="2">
    <location>
        <begin position="91"/>
        <end position="104"/>
    </location>
</feature>
<feature type="modified residue" description="Phosphoserine; by host CK2" evidence="1">
    <location>
        <position position="5"/>
    </location>
</feature>
<reference key="1">
    <citation type="journal article" date="1998" name="Nat. Med.">
        <title>Identification of a new human immunodeficiency virus type 1 distinct from group M and group O.</title>
        <authorList>
            <person name="Simon F."/>
            <person name="Mauclere P."/>
            <person name="Roques P."/>
            <person name="Loussert-Ajaka I."/>
            <person name="Muller-Trutwin M.C."/>
            <person name="Saragosti S."/>
            <person name="Georges-Courbot M.C."/>
            <person name="Barre-Sinoussi F."/>
            <person name="Brun-Vezinet F."/>
        </authorList>
    </citation>
    <scope>NUCLEOTIDE SEQUENCE [GENOMIC DNA]</scope>
</reference>
<reference key="2">
    <citation type="journal article" date="1999" name="Arch. Biochem. Biophys.">
        <title>The ins and outs of HIV Rev.</title>
        <authorList>
            <person name="Hope T.J."/>
        </authorList>
    </citation>
    <scope>REVIEW</scope>
</reference>
<comment type="function">
    <text evidence="1">Escorts unspliced or incompletely spliced viral pre-mRNAs (late transcripts) out of the nucleus of infected cells. These pre-mRNAs carry a recognition sequence called Rev responsive element (RRE) located in the env gene, that is not present in fully spliced viral mRNAs (early transcripts). This function is essential since most viral proteins are translated from unspliced or partially spliced pre-mRNAs which cannot exit the nucleus by the pathway used by fully processed cellular mRNAs. Rev itself is translated from a fully spliced mRNA that readily exits the nucleus. Rev's nuclear localization signal (NLS) binds directly to KPNB1/Importin beta-1 without previous binding to KPNA1/Importin alpha-1. KPNB1 binds to the GDP bound form of RAN (Ran-GDP) and targets Rev to the nucleus. In the nucleus, the conversion from Ran-GDP to Ran-GTP dissociates Rev from KPNB1 and allows Rev's binding to the RRE in viral pre-mRNAs. Rev multimerization on the RRE via cooperative assembly exposes its nuclear export signal (NES) to the surface. Rev can then form a complex with XPO1/CRM1 and Ran-GTP, leading to nuclear export of the complex. Conversion from Ran-GTP to Ran-GDP mediates dissociation of the Rev/RRE/XPO1/RAN complex, so that Rev can return to the nucleus for a subsequent round of export. Beside KPNB1, also seems to interact with TNPO1/Transportin-1, RANBP5/IPO5 and IPO7/RANBP7 for nuclear import. The nucleoporin-like HRB/RIP is an essential cofactor that probably indirectly interacts with Rev to release HIV RNAs from the perinuclear region to the cytoplasm.</text>
</comment>
<comment type="subunit">
    <text evidence="1">Homomultimer; when bound to the RRE. Multimeric assembly is essential for activity and may involve XPO1. Binds to human KPNB1, XPO1, TNPO1, RANBP5 and IPO7. Interacts with the viral Integrase. Interacts with human KHDRBS1. Interacts with human NAP1; this interaction decreases Rev multimerization and stimulates its activity. Interacts with human DEAD-box helicases DDX3 and DDX24; these interactions may serve for viral RNA export to the cytoplasm and packaging, respectively. Interacts with human PSIP1; this interaction may inhibit HIV-1 DNA integration by promoting dissociation of the Integrase-LEDGF/p75 complex.</text>
</comment>
<comment type="subcellular location">
    <subcellularLocation>
        <location evidence="1">Host nucleus</location>
        <location evidence="1">Host nucleolus</location>
    </subcellularLocation>
    <subcellularLocation>
        <location evidence="1">Host cytoplasm</location>
    </subcellularLocation>
    <text evidence="1">The presence of both nuclear import and nuclear export signals leads to continuous shuttling between the nucleus and cytoplasm.</text>
</comment>
<comment type="domain">
    <text evidence="1">The RNA-binding motif binds to the RRE, a 240 bp stem-and-loop structure present in incompletely spliced viral pre-mRNAs. This region also contains the NLS which mediates nuclear localization via KPNB1 binding and, when the N-terminal sequence is present, nucleolar targeting. These overlapping functions prevent Rev bound to RRE from undesirable return to the nucleus. When Rev binds the RRE, the NLS becomes masked while the NES remains accessible. The leucine-rich NES mediates binding to human XPO1.</text>
</comment>
<comment type="PTM">
    <text evidence="1">Asymmetrically arginine dimethylated at one site by host PRMT6. Methylation impairs the RNA-binding activity and export of viral RNA from the nucleus to the cytoplasm.</text>
</comment>
<comment type="PTM">
    <text evidence="1">Phosphorylated by protein kinase CK2. Presence of, and maybe binding to the N-terminus of the regulatory beta subunit of CK2 is necessary for CK2-mediated Rev's phosphorylation.</text>
</comment>
<comment type="miscellaneous">
    <text evidence="1">HIV-1 lineages are divided in three main groups, M (for Major), O (for Outlier), and N (for New, or Non-M, Non-O). The vast majority of strains found worldwide belong to the group M. Group O seems to be endemic to and largely confined to Cameroon and neighboring countries in West Central Africa, where these viruses represent a small minority of HIV-1 strains. The group N is represented by a limited number of isolates from Cameroonian persons. The group M is further subdivided in 9 clades or subtypes (A to D, F to H, J and K).</text>
</comment>
<comment type="similarity">
    <text evidence="1">Belongs to the HIV-1 REV protein family.</text>
</comment>
<sequence>MAGRSGVNDEELLRAVRVIKILYQSNPYPNSKGTRQARRNRRRRWRARQRQIRAISERILSSCLGGPPEPVDLPLPPLDRLTLDTEEDSGTPGTESQQGTATTE</sequence>
<accession>O91084</accession>
<organismHost>
    <name type="scientific">Homo sapiens</name>
    <name type="common">Human</name>
    <dbReference type="NCBI Taxonomy" id="9606"/>
</organismHost>